<organism>
    <name type="scientific">Listeria innocua serovar 6a (strain ATCC BAA-680 / CLIP 11262)</name>
    <dbReference type="NCBI Taxonomy" id="272626"/>
    <lineage>
        <taxon>Bacteria</taxon>
        <taxon>Bacillati</taxon>
        <taxon>Bacillota</taxon>
        <taxon>Bacilli</taxon>
        <taxon>Bacillales</taxon>
        <taxon>Listeriaceae</taxon>
        <taxon>Listeria</taxon>
    </lineage>
</organism>
<reference key="1">
    <citation type="journal article" date="2001" name="Science">
        <title>Comparative genomics of Listeria species.</title>
        <authorList>
            <person name="Glaser P."/>
            <person name="Frangeul L."/>
            <person name="Buchrieser C."/>
            <person name="Rusniok C."/>
            <person name="Amend A."/>
            <person name="Baquero F."/>
            <person name="Berche P."/>
            <person name="Bloecker H."/>
            <person name="Brandt P."/>
            <person name="Chakraborty T."/>
            <person name="Charbit A."/>
            <person name="Chetouani F."/>
            <person name="Couve E."/>
            <person name="de Daruvar A."/>
            <person name="Dehoux P."/>
            <person name="Domann E."/>
            <person name="Dominguez-Bernal G."/>
            <person name="Duchaud E."/>
            <person name="Durant L."/>
            <person name="Dussurget O."/>
            <person name="Entian K.-D."/>
            <person name="Fsihi H."/>
            <person name="Garcia-del Portillo F."/>
            <person name="Garrido P."/>
            <person name="Gautier L."/>
            <person name="Goebel W."/>
            <person name="Gomez-Lopez N."/>
            <person name="Hain T."/>
            <person name="Hauf J."/>
            <person name="Jackson D."/>
            <person name="Jones L.-M."/>
            <person name="Kaerst U."/>
            <person name="Kreft J."/>
            <person name="Kuhn M."/>
            <person name="Kunst F."/>
            <person name="Kurapkat G."/>
            <person name="Madueno E."/>
            <person name="Maitournam A."/>
            <person name="Mata Vicente J."/>
            <person name="Ng E."/>
            <person name="Nedjari H."/>
            <person name="Nordsiek G."/>
            <person name="Novella S."/>
            <person name="de Pablos B."/>
            <person name="Perez-Diaz J.-C."/>
            <person name="Purcell R."/>
            <person name="Remmel B."/>
            <person name="Rose M."/>
            <person name="Schlueter T."/>
            <person name="Simoes N."/>
            <person name="Tierrez A."/>
            <person name="Vazquez-Boland J.-A."/>
            <person name="Voss H."/>
            <person name="Wehland J."/>
            <person name="Cossart P."/>
        </authorList>
    </citation>
    <scope>NUCLEOTIDE SEQUENCE [LARGE SCALE GENOMIC DNA]</scope>
    <source>
        <strain>ATCC BAA-680 / CLIP 11262</strain>
    </source>
</reference>
<feature type="chain" id="PRO_1000056063" description="Large ribosomal subunit protein uL30">
    <location>
        <begin position="1"/>
        <end position="59"/>
    </location>
</feature>
<sequence length="59" mass="6493">MAKLEITLKRSLIGRPQPQRKTVQALGLGKTNSVVVKEDNPAIRGMITKVSHLVDVKEV</sequence>
<keyword id="KW-0687">Ribonucleoprotein</keyword>
<keyword id="KW-0689">Ribosomal protein</keyword>
<dbReference type="EMBL" id="AL596173">
    <property type="protein sequence ID" value="CAC97989.1"/>
    <property type="molecule type" value="Genomic_DNA"/>
</dbReference>
<dbReference type="RefSeq" id="WP_003720933.1">
    <property type="nucleotide sequence ID" value="NC_003212.1"/>
</dbReference>
<dbReference type="SMR" id="Q7ANU8"/>
<dbReference type="STRING" id="272626.gene:17567150"/>
<dbReference type="GeneID" id="93240495"/>
<dbReference type="KEGG" id="lin:rpmD"/>
<dbReference type="eggNOG" id="COG1841">
    <property type="taxonomic scope" value="Bacteria"/>
</dbReference>
<dbReference type="HOGENOM" id="CLU_131047_2_1_9"/>
<dbReference type="OrthoDB" id="9812790at2"/>
<dbReference type="Proteomes" id="UP000002513">
    <property type="component" value="Chromosome"/>
</dbReference>
<dbReference type="GO" id="GO:0022625">
    <property type="term" value="C:cytosolic large ribosomal subunit"/>
    <property type="evidence" value="ECO:0007669"/>
    <property type="project" value="TreeGrafter"/>
</dbReference>
<dbReference type="GO" id="GO:0003735">
    <property type="term" value="F:structural constituent of ribosome"/>
    <property type="evidence" value="ECO:0007669"/>
    <property type="project" value="InterPro"/>
</dbReference>
<dbReference type="GO" id="GO:0006412">
    <property type="term" value="P:translation"/>
    <property type="evidence" value="ECO:0007669"/>
    <property type="project" value="UniProtKB-UniRule"/>
</dbReference>
<dbReference type="CDD" id="cd01658">
    <property type="entry name" value="Ribosomal_L30"/>
    <property type="match status" value="1"/>
</dbReference>
<dbReference type="FunFam" id="3.30.1390.20:FF:000001">
    <property type="entry name" value="50S ribosomal protein L30"/>
    <property type="match status" value="1"/>
</dbReference>
<dbReference type="Gene3D" id="3.30.1390.20">
    <property type="entry name" value="Ribosomal protein L30, ferredoxin-like fold domain"/>
    <property type="match status" value="1"/>
</dbReference>
<dbReference type="HAMAP" id="MF_01371_B">
    <property type="entry name" value="Ribosomal_uL30_B"/>
    <property type="match status" value="1"/>
</dbReference>
<dbReference type="InterPro" id="IPR036919">
    <property type="entry name" value="Ribo_uL30_ferredoxin-like_sf"/>
</dbReference>
<dbReference type="InterPro" id="IPR005996">
    <property type="entry name" value="Ribosomal_uL30_bac-type"/>
</dbReference>
<dbReference type="InterPro" id="IPR018038">
    <property type="entry name" value="Ribosomal_uL30_CS"/>
</dbReference>
<dbReference type="InterPro" id="IPR016082">
    <property type="entry name" value="Ribosomal_uL30_ferredoxin-like"/>
</dbReference>
<dbReference type="NCBIfam" id="TIGR01308">
    <property type="entry name" value="rpmD_bact"/>
    <property type="match status" value="1"/>
</dbReference>
<dbReference type="PANTHER" id="PTHR15892:SF2">
    <property type="entry name" value="LARGE RIBOSOMAL SUBUNIT PROTEIN UL30M"/>
    <property type="match status" value="1"/>
</dbReference>
<dbReference type="PANTHER" id="PTHR15892">
    <property type="entry name" value="MITOCHONDRIAL RIBOSOMAL PROTEIN L30"/>
    <property type="match status" value="1"/>
</dbReference>
<dbReference type="Pfam" id="PF00327">
    <property type="entry name" value="Ribosomal_L30"/>
    <property type="match status" value="1"/>
</dbReference>
<dbReference type="PIRSF" id="PIRSF002211">
    <property type="entry name" value="Ribosomal_L30_bac-type"/>
    <property type="match status" value="1"/>
</dbReference>
<dbReference type="SUPFAM" id="SSF55129">
    <property type="entry name" value="Ribosomal protein L30p/L7e"/>
    <property type="match status" value="1"/>
</dbReference>
<dbReference type="PROSITE" id="PS00634">
    <property type="entry name" value="RIBOSOMAL_L30"/>
    <property type="match status" value="1"/>
</dbReference>
<name>RL30_LISIN</name>
<protein>
    <recommendedName>
        <fullName evidence="1">Large ribosomal subunit protein uL30</fullName>
    </recommendedName>
    <alternativeName>
        <fullName evidence="2">50S ribosomal protein L30</fullName>
    </alternativeName>
</protein>
<proteinExistence type="inferred from homology"/>
<gene>
    <name evidence="1" type="primary">rpmD</name>
    <name type="ordered locus">lin2763</name>
</gene>
<evidence type="ECO:0000255" key="1">
    <source>
        <dbReference type="HAMAP-Rule" id="MF_01371"/>
    </source>
</evidence>
<evidence type="ECO:0000305" key="2"/>
<accession>Q7ANU8</accession>
<comment type="subunit">
    <text evidence="1">Part of the 50S ribosomal subunit.</text>
</comment>
<comment type="similarity">
    <text evidence="1">Belongs to the universal ribosomal protein uL30 family.</text>
</comment>